<organism>
    <name type="scientific">Homo sapiens</name>
    <name type="common">Human</name>
    <dbReference type="NCBI Taxonomy" id="9606"/>
    <lineage>
        <taxon>Eukaryota</taxon>
        <taxon>Metazoa</taxon>
        <taxon>Chordata</taxon>
        <taxon>Craniata</taxon>
        <taxon>Vertebrata</taxon>
        <taxon>Euteleostomi</taxon>
        <taxon>Mammalia</taxon>
        <taxon>Eutheria</taxon>
        <taxon>Euarchontoglires</taxon>
        <taxon>Primates</taxon>
        <taxon>Haplorrhini</taxon>
        <taxon>Catarrhini</taxon>
        <taxon>Hominidae</taxon>
        <taxon>Homo</taxon>
    </lineage>
</organism>
<proteinExistence type="evidence at protein level"/>
<evidence type="ECO:0000250" key="1"/>
<evidence type="ECO:0000255" key="2"/>
<evidence type="ECO:0000255" key="3">
    <source>
        <dbReference type="PROSITE-ProRule" id="PRU01228"/>
    </source>
</evidence>
<evidence type="ECO:0000269" key="4">
    <source>
    </source>
</evidence>
<evidence type="ECO:0000269" key="5">
    <source>
    </source>
</evidence>
<evidence type="ECO:0000303" key="6">
    <source>
    </source>
</evidence>
<evidence type="ECO:0000305" key="7"/>
<evidence type="ECO:0007744" key="8">
    <source>
    </source>
</evidence>
<sequence length="718" mass="81036">MALYQRWRCLRLQGLQACRLHTAVVSTPPRWLAERLGLFEELWAAQVKRLASMAQKEPRTIKISLPGGQKIDAVAWNTTPYQLARQISSTLADTAVAAQVNGEPYDLERPLETDSDLRFLTFDSPEGKAVFWHSSTHVLGAAAEQFLGAVLCRGPSTEYGFYHDFFLGKERTIRGSELPVLERICQELTAAARPFRRLEASRDQLRQLFKDNPFKLHLIEEKVTGPTATVYGCGTLVDLCQGPHLRHTGQIGGLKLLSNSSSLWRSSGAPETLQRVSGISFPTTELLRVWEAWREEAELRDHRRIGKEQELFFFHELSPGSCFFLPRGTRVYNALVAFIRAEYAHRGFSEVKTPTLFSTKLWEQSGHWEHYQEDMFAVQPPGSDRPPSSQSDDSTRHITDTLALKPMNCPAHCLMFAHRPRSWRELPLRLADFGALHRAEASGGLGGLTRLRCFQQDDAHIFCTTDQLEAEIQSCLDFLRSVYAVLGFSFRLALSTRPSGFLGDPCLWDQAEQVLKQALKEFGEPWDLNSGDGAFYGPKIDVHLHDALGRPHQCGTIQLDFQLPLRFDLQYKGQAGALERPVLIHRAVLGSVERLLGVLAESCGGKWPLWLSPFQVVVIPVGSEQEEYAKEAQQSLRAAGLVSDLDADSGLTLSRRIRRAQLAHYNFQFVVGQKEQSKRTVNIRTRDNRRLGEWDLPEAVQRLVELQNTRVPNAEEIF</sequence>
<feature type="transit peptide" description="Mitochondrion" evidence="2">
    <location>
        <begin position="1"/>
        <end status="unknown"/>
    </location>
</feature>
<feature type="chain" id="PRO_0000254586" description="Threonine--tRNA ligase, mitochondrial">
    <location>
        <begin status="unknown"/>
        <end position="718"/>
    </location>
</feature>
<feature type="domain" description="TGS" evidence="3">
    <location>
        <begin position="55"/>
        <end position="121"/>
    </location>
</feature>
<feature type="modified residue" description="Phosphoserine" evidence="8">
    <location>
        <position position="52"/>
    </location>
</feature>
<feature type="splice variant" id="VSP_054537" description="In isoform 2." evidence="6">
    <location>
        <begin position="211"/>
        <end position="340"/>
    </location>
</feature>
<feature type="sequence variant" id="VAR_071853" description="In COXPD21; decreased expression at mRNA and protein levels; decreased threonine-tRNA ligase activity; affects both Thr activation and transfer; decreased aminoacyl-tRNA editing activity; decreased protein stability; loss of homodimerization; dbSNP:rs587777593." evidence="4 5">
    <original>P</original>
    <variation>L</variation>
    <location>
        <position position="282"/>
    </location>
</feature>
<feature type="sequence conflict" description="In Ref. 2; BAD96534." evidence="7" ref="2">
    <original>A</original>
    <variation>P</variation>
    <location>
        <position position="269"/>
    </location>
</feature>
<feature type="sequence conflict" description="In Ref. 2; BAD96534." evidence="7" ref="2">
    <original>E</original>
    <variation>G</variation>
    <location>
        <position position="579"/>
    </location>
</feature>
<accession>Q9BW92</accession>
<accession>Q53GW7</accession>
<accession>Q96I50</accession>
<accession>Q9H9V2</accession>
<reference key="1">
    <citation type="journal article" date="2004" name="Nat. Genet.">
        <title>Complete sequencing and characterization of 21,243 full-length human cDNAs.</title>
        <authorList>
            <person name="Ota T."/>
            <person name="Suzuki Y."/>
            <person name="Nishikawa T."/>
            <person name="Otsuki T."/>
            <person name="Sugiyama T."/>
            <person name="Irie R."/>
            <person name="Wakamatsu A."/>
            <person name="Hayashi K."/>
            <person name="Sato H."/>
            <person name="Nagai K."/>
            <person name="Kimura K."/>
            <person name="Makita H."/>
            <person name="Sekine M."/>
            <person name="Obayashi M."/>
            <person name="Nishi T."/>
            <person name="Shibahara T."/>
            <person name="Tanaka T."/>
            <person name="Ishii S."/>
            <person name="Yamamoto J."/>
            <person name="Saito K."/>
            <person name="Kawai Y."/>
            <person name="Isono Y."/>
            <person name="Nakamura Y."/>
            <person name="Nagahari K."/>
            <person name="Murakami K."/>
            <person name="Yasuda T."/>
            <person name="Iwayanagi T."/>
            <person name="Wagatsuma M."/>
            <person name="Shiratori A."/>
            <person name="Sudo H."/>
            <person name="Hosoiri T."/>
            <person name="Kaku Y."/>
            <person name="Kodaira H."/>
            <person name="Kondo H."/>
            <person name="Sugawara M."/>
            <person name="Takahashi M."/>
            <person name="Kanda K."/>
            <person name="Yokoi T."/>
            <person name="Furuya T."/>
            <person name="Kikkawa E."/>
            <person name="Omura Y."/>
            <person name="Abe K."/>
            <person name="Kamihara K."/>
            <person name="Katsuta N."/>
            <person name="Sato K."/>
            <person name="Tanikawa M."/>
            <person name="Yamazaki M."/>
            <person name="Ninomiya K."/>
            <person name="Ishibashi T."/>
            <person name="Yamashita H."/>
            <person name="Murakawa K."/>
            <person name="Fujimori K."/>
            <person name="Tanai H."/>
            <person name="Kimata M."/>
            <person name="Watanabe M."/>
            <person name="Hiraoka S."/>
            <person name="Chiba Y."/>
            <person name="Ishida S."/>
            <person name="Ono Y."/>
            <person name="Takiguchi S."/>
            <person name="Watanabe S."/>
            <person name="Yosida M."/>
            <person name="Hotuta T."/>
            <person name="Kusano J."/>
            <person name="Kanehori K."/>
            <person name="Takahashi-Fujii A."/>
            <person name="Hara H."/>
            <person name="Tanase T.-O."/>
            <person name="Nomura Y."/>
            <person name="Togiya S."/>
            <person name="Komai F."/>
            <person name="Hara R."/>
            <person name="Takeuchi K."/>
            <person name="Arita M."/>
            <person name="Imose N."/>
            <person name="Musashino K."/>
            <person name="Yuuki H."/>
            <person name="Oshima A."/>
            <person name="Sasaki N."/>
            <person name="Aotsuka S."/>
            <person name="Yoshikawa Y."/>
            <person name="Matsunawa H."/>
            <person name="Ichihara T."/>
            <person name="Shiohata N."/>
            <person name="Sano S."/>
            <person name="Moriya S."/>
            <person name="Momiyama H."/>
            <person name="Satoh N."/>
            <person name="Takami S."/>
            <person name="Terashima Y."/>
            <person name="Suzuki O."/>
            <person name="Nakagawa S."/>
            <person name="Senoh A."/>
            <person name="Mizoguchi H."/>
            <person name="Goto Y."/>
            <person name="Shimizu F."/>
            <person name="Wakebe H."/>
            <person name="Hishigaki H."/>
            <person name="Watanabe T."/>
            <person name="Sugiyama A."/>
            <person name="Takemoto M."/>
            <person name="Kawakami B."/>
            <person name="Yamazaki M."/>
            <person name="Watanabe K."/>
            <person name="Kumagai A."/>
            <person name="Itakura S."/>
            <person name="Fukuzumi Y."/>
            <person name="Fujimori Y."/>
            <person name="Komiyama M."/>
            <person name="Tashiro H."/>
            <person name="Tanigami A."/>
            <person name="Fujiwara T."/>
            <person name="Ono T."/>
            <person name="Yamada K."/>
            <person name="Fujii Y."/>
            <person name="Ozaki K."/>
            <person name="Hirao M."/>
            <person name="Ohmori Y."/>
            <person name="Kawabata A."/>
            <person name="Hikiji T."/>
            <person name="Kobatake N."/>
            <person name="Inagaki H."/>
            <person name="Ikema Y."/>
            <person name="Okamoto S."/>
            <person name="Okitani R."/>
            <person name="Kawakami T."/>
            <person name="Noguchi S."/>
            <person name="Itoh T."/>
            <person name="Shigeta K."/>
            <person name="Senba T."/>
            <person name="Matsumura K."/>
            <person name="Nakajima Y."/>
            <person name="Mizuno T."/>
            <person name="Morinaga M."/>
            <person name="Sasaki M."/>
            <person name="Togashi T."/>
            <person name="Oyama M."/>
            <person name="Hata H."/>
            <person name="Watanabe M."/>
            <person name="Komatsu T."/>
            <person name="Mizushima-Sugano J."/>
            <person name="Satoh T."/>
            <person name="Shirai Y."/>
            <person name="Takahashi Y."/>
            <person name="Nakagawa K."/>
            <person name="Okumura K."/>
            <person name="Nagase T."/>
            <person name="Nomura N."/>
            <person name="Kikuchi H."/>
            <person name="Masuho Y."/>
            <person name="Yamashita R."/>
            <person name="Nakai K."/>
            <person name="Yada T."/>
            <person name="Nakamura Y."/>
            <person name="Ohara O."/>
            <person name="Isogai T."/>
            <person name="Sugano S."/>
        </authorList>
    </citation>
    <scope>NUCLEOTIDE SEQUENCE [LARGE SCALE MRNA] (ISOFORM 2)</scope>
</reference>
<reference key="2">
    <citation type="submission" date="2005-04" db="EMBL/GenBank/DDBJ databases">
        <authorList>
            <person name="Suzuki Y."/>
            <person name="Sugano S."/>
            <person name="Totoki Y."/>
            <person name="Toyoda A."/>
            <person name="Takeda T."/>
            <person name="Sakaki Y."/>
            <person name="Tanaka A."/>
            <person name="Yokoyama S."/>
        </authorList>
    </citation>
    <scope>NUCLEOTIDE SEQUENCE [LARGE SCALE MRNA] (ISOFORM 1)</scope>
    <source>
        <tissue>Liver</tissue>
    </source>
</reference>
<reference key="3">
    <citation type="journal article" date="2006" name="Nature">
        <title>The DNA sequence and biological annotation of human chromosome 1.</title>
        <authorList>
            <person name="Gregory S.G."/>
            <person name="Barlow K.F."/>
            <person name="McLay K.E."/>
            <person name="Kaul R."/>
            <person name="Swarbreck D."/>
            <person name="Dunham A."/>
            <person name="Scott C.E."/>
            <person name="Howe K.L."/>
            <person name="Woodfine K."/>
            <person name="Spencer C.C.A."/>
            <person name="Jones M.C."/>
            <person name="Gillson C."/>
            <person name="Searle S."/>
            <person name="Zhou Y."/>
            <person name="Kokocinski F."/>
            <person name="McDonald L."/>
            <person name="Evans R."/>
            <person name="Phillips K."/>
            <person name="Atkinson A."/>
            <person name="Cooper R."/>
            <person name="Jones C."/>
            <person name="Hall R.E."/>
            <person name="Andrews T.D."/>
            <person name="Lloyd C."/>
            <person name="Ainscough R."/>
            <person name="Almeida J.P."/>
            <person name="Ambrose K.D."/>
            <person name="Anderson F."/>
            <person name="Andrew R.W."/>
            <person name="Ashwell R.I.S."/>
            <person name="Aubin K."/>
            <person name="Babbage A.K."/>
            <person name="Bagguley C.L."/>
            <person name="Bailey J."/>
            <person name="Beasley H."/>
            <person name="Bethel G."/>
            <person name="Bird C.P."/>
            <person name="Bray-Allen S."/>
            <person name="Brown J.Y."/>
            <person name="Brown A.J."/>
            <person name="Buckley D."/>
            <person name="Burton J."/>
            <person name="Bye J."/>
            <person name="Carder C."/>
            <person name="Chapman J.C."/>
            <person name="Clark S.Y."/>
            <person name="Clarke G."/>
            <person name="Clee C."/>
            <person name="Cobley V."/>
            <person name="Collier R.E."/>
            <person name="Corby N."/>
            <person name="Coville G.J."/>
            <person name="Davies J."/>
            <person name="Deadman R."/>
            <person name="Dunn M."/>
            <person name="Earthrowl M."/>
            <person name="Ellington A.G."/>
            <person name="Errington H."/>
            <person name="Frankish A."/>
            <person name="Frankland J."/>
            <person name="French L."/>
            <person name="Garner P."/>
            <person name="Garnett J."/>
            <person name="Gay L."/>
            <person name="Ghori M.R.J."/>
            <person name="Gibson R."/>
            <person name="Gilby L.M."/>
            <person name="Gillett W."/>
            <person name="Glithero R.J."/>
            <person name="Grafham D.V."/>
            <person name="Griffiths C."/>
            <person name="Griffiths-Jones S."/>
            <person name="Grocock R."/>
            <person name="Hammond S."/>
            <person name="Harrison E.S.I."/>
            <person name="Hart E."/>
            <person name="Haugen E."/>
            <person name="Heath P.D."/>
            <person name="Holmes S."/>
            <person name="Holt K."/>
            <person name="Howden P.J."/>
            <person name="Hunt A.R."/>
            <person name="Hunt S.E."/>
            <person name="Hunter G."/>
            <person name="Isherwood J."/>
            <person name="James R."/>
            <person name="Johnson C."/>
            <person name="Johnson D."/>
            <person name="Joy A."/>
            <person name="Kay M."/>
            <person name="Kershaw J.K."/>
            <person name="Kibukawa M."/>
            <person name="Kimberley A.M."/>
            <person name="King A."/>
            <person name="Knights A.J."/>
            <person name="Lad H."/>
            <person name="Laird G."/>
            <person name="Lawlor S."/>
            <person name="Leongamornlert D.A."/>
            <person name="Lloyd D.M."/>
            <person name="Loveland J."/>
            <person name="Lovell J."/>
            <person name="Lush M.J."/>
            <person name="Lyne R."/>
            <person name="Martin S."/>
            <person name="Mashreghi-Mohammadi M."/>
            <person name="Matthews L."/>
            <person name="Matthews N.S.W."/>
            <person name="McLaren S."/>
            <person name="Milne S."/>
            <person name="Mistry S."/>
            <person name="Moore M.J.F."/>
            <person name="Nickerson T."/>
            <person name="O'Dell C.N."/>
            <person name="Oliver K."/>
            <person name="Palmeiri A."/>
            <person name="Palmer S.A."/>
            <person name="Parker A."/>
            <person name="Patel D."/>
            <person name="Pearce A.V."/>
            <person name="Peck A.I."/>
            <person name="Pelan S."/>
            <person name="Phelps K."/>
            <person name="Phillimore B.J."/>
            <person name="Plumb R."/>
            <person name="Rajan J."/>
            <person name="Raymond C."/>
            <person name="Rouse G."/>
            <person name="Saenphimmachak C."/>
            <person name="Sehra H.K."/>
            <person name="Sheridan E."/>
            <person name="Shownkeen R."/>
            <person name="Sims S."/>
            <person name="Skuce C.D."/>
            <person name="Smith M."/>
            <person name="Steward C."/>
            <person name="Subramanian S."/>
            <person name="Sycamore N."/>
            <person name="Tracey A."/>
            <person name="Tromans A."/>
            <person name="Van Helmond Z."/>
            <person name="Wall M."/>
            <person name="Wallis J.M."/>
            <person name="White S."/>
            <person name="Whitehead S.L."/>
            <person name="Wilkinson J.E."/>
            <person name="Willey D.L."/>
            <person name="Williams H."/>
            <person name="Wilming L."/>
            <person name="Wray P.W."/>
            <person name="Wu Z."/>
            <person name="Coulson A."/>
            <person name="Vaudin M."/>
            <person name="Sulston J.E."/>
            <person name="Durbin R.M."/>
            <person name="Hubbard T."/>
            <person name="Wooster R."/>
            <person name="Dunham I."/>
            <person name="Carter N.P."/>
            <person name="McVean G."/>
            <person name="Ross M.T."/>
            <person name="Harrow J."/>
            <person name="Olson M.V."/>
            <person name="Beck S."/>
            <person name="Rogers J."/>
            <person name="Bentley D.R."/>
        </authorList>
    </citation>
    <scope>NUCLEOTIDE SEQUENCE [LARGE SCALE GENOMIC DNA]</scope>
</reference>
<reference key="4">
    <citation type="submission" date="2005-09" db="EMBL/GenBank/DDBJ databases">
        <authorList>
            <person name="Mural R.J."/>
            <person name="Istrail S."/>
            <person name="Sutton G."/>
            <person name="Florea L."/>
            <person name="Halpern A.L."/>
            <person name="Mobarry C.M."/>
            <person name="Lippert R."/>
            <person name="Walenz B."/>
            <person name="Shatkay H."/>
            <person name="Dew I."/>
            <person name="Miller J.R."/>
            <person name="Flanigan M.J."/>
            <person name="Edwards N.J."/>
            <person name="Bolanos R."/>
            <person name="Fasulo D."/>
            <person name="Halldorsson B.V."/>
            <person name="Hannenhalli S."/>
            <person name="Turner R."/>
            <person name="Yooseph S."/>
            <person name="Lu F."/>
            <person name="Nusskern D.R."/>
            <person name="Shue B.C."/>
            <person name="Zheng X.H."/>
            <person name="Zhong F."/>
            <person name="Delcher A.L."/>
            <person name="Huson D.H."/>
            <person name="Kravitz S.A."/>
            <person name="Mouchard L."/>
            <person name="Reinert K."/>
            <person name="Remington K.A."/>
            <person name="Clark A.G."/>
            <person name="Waterman M.S."/>
            <person name="Eichler E.E."/>
            <person name="Adams M.D."/>
            <person name="Hunkapiller M.W."/>
            <person name="Myers E.W."/>
            <person name="Venter J.C."/>
        </authorList>
    </citation>
    <scope>NUCLEOTIDE SEQUENCE [LARGE SCALE GENOMIC DNA]</scope>
</reference>
<reference key="5">
    <citation type="journal article" date="2004" name="Genome Res.">
        <title>The status, quality, and expansion of the NIH full-length cDNA project: the Mammalian Gene Collection (MGC).</title>
        <authorList>
            <consortium name="The MGC Project Team"/>
        </authorList>
    </citation>
    <scope>NUCLEOTIDE SEQUENCE [LARGE SCALE MRNA] (ISOFORM 1)</scope>
    <source>
        <tissue>Brain</tissue>
        <tissue>Lung</tissue>
    </source>
</reference>
<reference key="6">
    <citation type="journal article" date="2005" name="Biochemistry">
        <title>Toward the full set of human mitochondrial aminoacyl-tRNA synthetases: characterization of AspRS and TyrRS.</title>
        <authorList>
            <person name="Bonnefond L."/>
            <person name="Fender A."/>
            <person name="Rudinger-Thirion J."/>
            <person name="Giege R."/>
            <person name="Florentz C."/>
            <person name="Sissler M."/>
        </authorList>
    </citation>
    <scope>IDENTIFICATION</scope>
</reference>
<reference key="7">
    <citation type="journal article" date="2011" name="BMC Syst. Biol.">
        <title>Initial characterization of the human central proteome.</title>
        <authorList>
            <person name="Burkard T.R."/>
            <person name="Planyavsky M."/>
            <person name="Kaupe I."/>
            <person name="Breitwieser F.P."/>
            <person name="Buerckstuemmer T."/>
            <person name="Bennett K.L."/>
            <person name="Superti-Furga G."/>
            <person name="Colinge J."/>
        </authorList>
    </citation>
    <scope>IDENTIFICATION BY MASS SPECTROMETRY [LARGE SCALE ANALYSIS]</scope>
</reference>
<reference key="8">
    <citation type="journal article" date="2011" name="Sci. Signal.">
        <title>System-wide temporal characterization of the proteome and phosphoproteome of human embryonic stem cell differentiation.</title>
        <authorList>
            <person name="Rigbolt K.T."/>
            <person name="Prokhorova T.A."/>
            <person name="Akimov V."/>
            <person name="Henningsen J."/>
            <person name="Johansen P.T."/>
            <person name="Kratchmarova I."/>
            <person name="Kassem M."/>
            <person name="Mann M."/>
            <person name="Olsen J.V."/>
            <person name="Blagoev B."/>
        </authorList>
    </citation>
    <scope>PHOSPHORYLATION [LARGE SCALE ANALYSIS] AT SER-52</scope>
    <scope>IDENTIFICATION BY MASS SPECTROMETRY [LARGE SCALE ANALYSIS]</scope>
</reference>
<reference key="9">
    <citation type="journal article" date="2014" name="Hum. Mutat.">
        <title>VARS2 and TARS2 mutations in patients with mitochondrial encephalomyopathies.</title>
        <authorList>
            <person name="Diodato D."/>
            <person name="Melchionda L."/>
            <person name="Haack T.B."/>
            <person name="Dallabona C."/>
            <person name="Baruffini E."/>
            <person name="Donnini C."/>
            <person name="Granata T."/>
            <person name="Ragona F."/>
            <person name="Balestri P."/>
            <person name="Margollicci M."/>
            <person name="Lamantea E."/>
            <person name="Nasca A."/>
            <person name="Powell C.A."/>
            <person name="Minczuk M."/>
            <person name="Strom T.M."/>
            <person name="Meitinger T."/>
            <person name="Prokisch H."/>
            <person name="Lamperti C."/>
            <person name="Zeviani M."/>
            <person name="Ghezzi D."/>
        </authorList>
    </citation>
    <scope>INVOLVEMENT IN COXPD21</scope>
    <scope>VARIANT COXPD21 LEU-282</scope>
    <scope>CHARACTERIZATION OF VARIANT COXPD21</scope>
</reference>
<reference key="10">
    <citation type="journal article" date="2015" name="Proteomics">
        <title>N-terminome analysis of the human mitochondrial proteome.</title>
        <authorList>
            <person name="Vaca Jacome A.S."/>
            <person name="Rabilloud T."/>
            <person name="Schaeffer-Reiss C."/>
            <person name="Rompais M."/>
            <person name="Ayoub D."/>
            <person name="Lane L."/>
            <person name="Bairoch A."/>
            <person name="Van Dorsselaer A."/>
            <person name="Carapito C."/>
        </authorList>
    </citation>
    <scope>IDENTIFICATION BY MASS SPECTROMETRY [LARGE SCALE ANALYSIS]</scope>
</reference>
<reference key="11">
    <citation type="journal article" date="2016" name="J. Biol. Chem.">
        <title>A human disease-causing point mutation in mitochondrial threonyl-tRNA synthetase induces both structural and functional defects.</title>
        <authorList>
            <person name="Wang Y."/>
            <person name="Zhou X.L."/>
            <person name="Ruan Z.R."/>
            <person name="Liu R.J."/>
            <person name="Eriani G."/>
            <person name="Wang E.D."/>
        </authorList>
    </citation>
    <scope>FUNCTION</scope>
    <scope>CATALYTIC ACTIVITY</scope>
    <scope>SUBUNIT</scope>
    <scope>BIOPHYSICOCHEMICAL PROPERTIES</scope>
    <scope>CHARACTERIZATION OF VARIANT COXPD21 LEU-282</scope>
</reference>
<comment type="function">
    <text evidence="5">Catalyzes the attachment of threonine to tRNA(Thr) in a two-step reaction: threonine is first activated by ATP to form Thr-AMP and then transferred to the acceptor end of tRNA(Thr). Also edits incorrectly charged tRNA(Thr) via its editing domain.</text>
</comment>
<comment type="catalytic activity">
    <reaction evidence="5">
        <text>tRNA(Thr) + L-threonine + ATP = L-threonyl-tRNA(Thr) + AMP + diphosphate + H(+)</text>
        <dbReference type="Rhea" id="RHEA:24624"/>
        <dbReference type="Rhea" id="RHEA-COMP:9670"/>
        <dbReference type="Rhea" id="RHEA-COMP:9704"/>
        <dbReference type="ChEBI" id="CHEBI:15378"/>
        <dbReference type="ChEBI" id="CHEBI:30616"/>
        <dbReference type="ChEBI" id="CHEBI:33019"/>
        <dbReference type="ChEBI" id="CHEBI:57926"/>
        <dbReference type="ChEBI" id="CHEBI:78442"/>
        <dbReference type="ChEBI" id="CHEBI:78534"/>
        <dbReference type="ChEBI" id="CHEBI:456215"/>
        <dbReference type="EC" id="6.1.1.3"/>
    </reaction>
</comment>
<comment type="biophysicochemical properties">
    <kinetics>
        <KM evidence="5">2.5 mM for L-threonine</KM>
        <KM evidence="5">1.1 uM for tRNA(Thr)</KM>
        <KM evidence="5">180 mM for L-serine</KM>
        <text evidence="5">kcat is 5.8 sec(-1) for the activation reaction of L-threonine. kcat is 1.1 sec(-1) for the activation reaction of L-serine. kcat is 0.061 sec(-1) for the aminoacylation of tRNA(Thr) with L-threonine.</text>
    </kinetics>
</comment>
<comment type="subunit">
    <text evidence="5">Homodimer.</text>
</comment>
<comment type="interaction">
    <interactant intactId="EBI-1045099">
        <id>Q9BW92</id>
    </interactant>
    <interactant intactId="EBI-714543">
        <id>Q15041</id>
        <label>ARL6IP1</label>
    </interactant>
    <organismsDiffer>false</organismsDiffer>
    <experiments>3</experiments>
</comment>
<comment type="interaction">
    <interactant intactId="EBI-1045099">
        <id>Q9BW92</id>
    </interactant>
    <interactant intactId="EBI-6425205">
        <id>Q9NWX5</id>
        <label>ASB6</label>
    </interactant>
    <organismsDiffer>false</organismsDiffer>
    <experiments>3</experiments>
</comment>
<comment type="interaction">
    <interactant intactId="EBI-1045099">
        <id>Q9BW92</id>
    </interactant>
    <interactant intactId="EBI-742054">
        <id>Q96D03</id>
        <label>DDIT4L</label>
    </interactant>
    <organismsDiffer>false</organismsDiffer>
    <experiments>3</experiments>
</comment>
<comment type="interaction">
    <interactant intactId="EBI-1045099">
        <id>Q9BW92</id>
    </interactant>
    <interactant intactId="EBI-3918971">
        <id>Q9Y680</id>
        <label>FKBP7</label>
    </interactant>
    <organismsDiffer>false</organismsDiffer>
    <experiments>3</experiments>
</comment>
<comment type="interaction">
    <interactant intactId="EBI-1045099">
        <id>Q9BW92</id>
    </interactant>
    <interactant intactId="EBI-944295">
        <id>Q969L2</id>
        <label>MAL2</label>
    </interactant>
    <organismsDiffer>false</organismsDiffer>
    <experiments>3</experiments>
</comment>
<comment type="interaction">
    <interactant intactId="EBI-1045099">
        <id>Q9BW92</id>
    </interactant>
    <interactant intactId="EBI-725795">
        <id>O60664</id>
        <label>PLIN3</label>
    </interactant>
    <organismsDiffer>false</organismsDiffer>
    <experiments>3</experiments>
</comment>
<comment type="interaction">
    <interactant intactId="EBI-1045099">
        <id>Q9BW92</id>
    </interactant>
    <interactant intactId="EBI-2854842">
        <id>Q8WV19</id>
        <label>SFT2D1</label>
    </interactant>
    <organismsDiffer>false</organismsDiffer>
    <experiments>3</experiments>
</comment>
<comment type="interaction">
    <interactant intactId="EBI-1045099">
        <id>Q9BW92</id>
    </interactant>
    <interactant intactId="EBI-3940816">
        <id>Q9BYT1</id>
        <label>SLC17A9</label>
    </interactant>
    <organismsDiffer>false</organismsDiffer>
    <experiments>3</experiments>
</comment>
<comment type="interaction">
    <interactant intactId="EBI-1045099">
        <id>Q9BW92</id>
    </interactant>
    <interactant intactId="EBI-2800683">
        <id>Q16563</id>
        <label>SYPL1</label>
    </interactant>
    <organismsDiffer>false</organismsDiffer>
    <experiments>3</experiments>
</comment>
<comment type="interaction">
    <interactant intactId="EBI-1045099">
        <id>Q9BW92</id>
    </interactant>
    <interactant intactId="EBI-1056629">
        <id>A2RTX5</id>
        <label>TARS3</label>
    </interactant>
    <organismsDiffer>false</organismsDiffer>
    <experiments>3</experiments>
</comment>
<comment type="interaction">
    <interactant intactId="EBI-1045099">
        <id>Q9BW92</id>
    </interactant>
    <interactant intactId="EBI-1044859">
        <id>Q9UBN6</id>
        <label>TNFRSF10D</label>
    </interactant>
    <organismsDiffer>false</organismsDiffer>
    <experiments>3</experiments>
</comment>
<comment type="subcellular location">
    <subcellularLocation>
        <location evidence="1">Mitochondrion matrix</location>
    </subcellularLocation>
</comment>
<comment type="alternative products">
    <event type="alternative splicing"/>
    <isoform>
        <id>Q9BW92-1</id>
        <name>1</name>
        <sequence type="displayed"/>
    </isoform>
    <isoform>
        <id>Q9BW92-2</id>
        <name>2</name>
        <sequence type="described" ref="VSP_054537"/>
    </isoform>
</comment>
<comment type="disease" evidence="4 5">
    <disease id="DI-04173">
        <name>Combined oxidative phosphorylation deficiency 21</name>
        <acronym>COXPD21</acronym>
        <description>A mitochondrial disorder characterized by a lethal encephalomyopathy. Shortly after birth, affected individuals manifest axial hypotonia, limb hypertonia, psychomotor delay, and increased serum lactate. Additional features include subsarcolemmal lipofuscin-positive deposits in muscle, cerebral spongiosis, and hepatic steatosis.</description>
        <dbReference type="MIM" id="615918"/>
    </disease>
    <text>The disease is caused by variants affecting the gene represented in this entry.</text>
</comment>
<comment type="similarity">
    <text evidence="7">Belongs to the class-II aminoacyl-tRNA synthetase family.</text>
</comment>
<name>SYTM_HUMAN</name>
<keyword id="KW-0025">Alternative splicing</keyword>
<keyword id="KW-0030">Aminoacyl-tRNA synthetase</keyword>
<keyword id="KW-0067">ATP-binding</keyword>
<keyword id="KW-0225">Disease variant</keyword>
<keyword id="KW-0436">Ligase</keyword>
<keyword id="KW-0496">Mitochondrion</keyword>
<keyword id="KW-0547">Nucleotide-binding</keyword>
<keyword id="KW-0597">Phosphoprotein</keyword>
<keyword id="KW-1274">Primary mitochondrial disease</keyword>
<keyword id="KW-0648">Protein biosynthesis</keyword>
<keyword id="KW-1267">Proteomics identification</keyword>
<keyword id="KW-1185">Reference proteome</keyword>
<keyword id="KW-0809">Transit peptide</keyword>
<dbReference type="EC" id="6.1.1.3" evidence="5"/>
<dbReference type="EMBL" id="AK022590">
    <property type="protein sequence ID" value="BAB14117.1"/>
    <property type="molecule type" value="mRNA"/>
</dbReference>
<dbReference type="EMBL" id="AK222814">
    <property type="protein sequence ID" value="BAD96534.1"/>
    <property type="molecule type" value="mRNA"/>
</dbReference>
<dbReference type="EMBL" id="AL356356">
    <property type="status" value="NOT_ANNOTATED_CDS"/>
    <property type="molecule type" value="Genomic_DNA"/>
</dbReference>
<dbReference type="EMBL" id="CH471121">
    <property type="protein sequence ID" value="EAW53549.1"/>
    <property type="molecule type" value="Genomic_DNA"/>
</dbReference>
<dbReference type="EMBL" id="BC000541">
    <property type="protein sequence ID" value="AAH00541.1"/>
    <property type="molecule type" value="mRNA"/>
</dbReference>
<dbReference type="EMBL" id="BC007824">
    <property type="protein sequence ID" value="AAH07824.2"/>
    <property type="molecule type" value="mRNA"/>
</dbReference>
<dbReference type="EMBL" id="BC009997">
    <property type="protein sequence ID" value="AAH09997.1"/>
    <property type="molecule type" value="mRNA"/>
</dbReference>
<dbReference type="CCDS" id="CCDS60252.1">
    <molecule id="Q9BW92-2"/>
</dbReference>
<dbReference type="CCDS" id="CCDS952.1">
    <molecule id="Q9BW92-1"/>
</dbReference>
<dbReference type="RefSeq" id="NP_001258825.1">
    <molecule id="Q9BW92-2"/>
    <property type="nucleotide sequence ID" value="NM_001271896.2"/>
</dbReference>
<dbReference type="RefSeq" id="NP_079426.2">
    <molecule id="Q9BW92-1"/>
    <property type="nucleotide sequence ID" value="NM_025150.4"/>
</dbReference>
<dbReference type="SMR" id="Q9BW92"/>
<dbReference type="BioGRID" id="123188">
    <property type="interactions" value="194"/>
</dbReference>
<dbReference type="FunCoup" id="Q9BW92">
    <property type="interactions" value="282"/>
</dbReference>
<dbReference type="IntAct" id="Q9BW92">
    <property type="interactions" value="90"/>
</dbReference>
<dbReference type="MINT" id="Q9BW92"/>
<dbReference type="STRING" id="9606.ENSP00000358060"/>
<dbReference type="ChEMBL" id="CHEMBL3351186"/>
<dbReference type="DrugBank" id="DB00156">
    <property type="generic name" value="Threonine"/>
</dbReference>
<dbReference type="GlyGen" id="Q9BW92">
    <property type="glycosylation" value="4 sites, 1 N-linked glycan (1 site), 1 O-linked glycan (2 sites)"/>
</dbReference>
<dbReference type="iPTMnet" id="Q9BW92"/>
<dbReference type="PhosphoSitePlus" id="Q9BW92"/>
<dbReference type="SwissPalm" id="Q9BW92"/>
<dbReference type="BioMuta" id="TARS2"/>
<dbReference type="DMDM" id="74752395"/>
<dbReference type="jPOST" id="Q9BW92"/>
<dbReference type="MassIVE" id="Q9BW92"/>
<dbReference type="PaxDb" id="9606-ENSP00000358060"/>
<dbReference type="PeptideAtlas" id="Q9BW92"/>
<dbReference type="ProteomicsDB" id="79266">
    <molecule id="Q9BW92-1"/>
</dbReference>
<dbReference type="ProteomicsDB" id="81363"/>
<dbReference type="Pumba" id="Q9BW92"/>
<dbReference type="Antibodypedia" id="34029">
    <property type="antibodies" value="75 antibodies from 20 providers"/>
</dbReference>
<dbReference type="DNASU" id="80222"/>
<dbReference type="Ensembl" id="ENST00000369054.6">
    <molecule id="Q9BW92-2"/>
    <property type="protein sequence ID" value="ENSP00000358050.2"/>
    <property type="gene ID" value="ENSG00000143374.18"/>
</dbReference>
<dbReference type="Ensembl" id="ENST00000369064.8">
    <molecule id="Q9BW92-1"/>
    <property type="protein sequence ID" value="ENSP00000358060.3"/>
    <property type="gene ID" value="ENSG00000143374.18"/>
</dbReference>
<dbReference type="GeneID" id="80222"/>
<dbReference type="KEGG" id="hsa:80222"/>
<dbReference type="MANE-Select" id="ENST00000369064.8">
    <property type="protein sequence ID" value="ENSP00000358060.3"/>
    <property type="RefSeq nucleotide sequence ID" value="NM_025150.5"/>
    <property type="RefSeq protein sequence ID" value="NP_079426.2"/>
</dbReference>
<dbReference type="UCSC" id="uc001euq.5">
    <molecule id="Q9BW92-1"/>
    <property type="organism name" value="human"/>
</dbReference>
<dbReference type="AGR" id="HGNC:30740"/>
<dbReference type="CTD" id="80222"/>
<dbReference type="DisGeNET" id="80222"/>
<dbReference type="GeneCards" id="TARS2"/>
<dbReference type="HGNC" id="HGNC:30740">
    <property type="gene designation" value="TARS2"/>
</dbReference>
<dbReference type="HPA" id="ENSG00000143374">
    <property type="expression patterns" value="Low tissue specificity"/>
</dbReference>
<dbReference type="MalaCards" id="TARS2"/>
<dbReference type="MIM" id="612805">
    <property type="type" value="gene"/>
</dbReference>
<dbReference type="MIM" id="615918">
    <property type="type" value="phenotype"/>
</dbReference>
<dbReference type="neXtProt" id="NX_Q9BW92"/>
<dbReference type="OpenTargets" id="ENSG00000143374"/>
<dbReference type="Orphanet" id="420733">
    <property type="disease" value="Combined oxidative phosphorylation defect type 21"/>
</dbReference>
<dbReference type="PharmGKB" id="PA162405200"/>
<dbReference type="VEuPathDB" id="HostDB:ENSG00000143374"/>
<dbReference type="eggNOG" id="KOG1637">
    <property type="taxonomic scope" value="Eukaryota"/>
</dbReference>
<dbReference type="GeneTree" id="ENSGT00940000161600"/>
<dbReference type="HOGENOM" id="CLU_008554_0_3_1"/>
<dbReference type="InParanoid" id="Q9BW92"/>
<dbReference type="OMA" id="PILEQTC"/>
<dbReference type="OrthoDB" id="5423599at2759"/>
<dbReference type="PAN-GO" id="Q9BW92">
    <property type="GO annotations" value="2 GO annotations based on evolutionary models"/>
</dbReference>
<dbReference type="PhylomeDB" id="Q9BW92"/>
<dbReference type="TreeFam" id="TF300858"/>
<dbReference type="PathwayCommons" id="Q9BW92"/>
<dbReference type="Reactome" id="R-HSA-379726">
    <property type="pathway name" value="Mitochondrial tRNA aminoacylation"/>
</dbReference>
<dbReference type="SignaLink" id="Q9BW92"/>
<dbReference type="SIGNOR" id="Q9BW92"/>
<dbReference type="BioGRID-ORCS" id="80222">
    <property type="hits" value="514 hits in 1177 CRISPR screens"/>
</dbReference>
<dbReference type="ChiTaRS" id="TARS2">
    <property type="organism name" value="human"/>
</dbReference>
<dbReference type="GenomeRNAi" id="80222"/>
<dbReference type="Pharos" id="Q9BW92">
    <property type="development level" value="Tbio"/>
</dbReference>
<dbReference type="PRO" id="PR:Q9BW92"/>
<dbReference type="Proteomes" id="UP000005640">
    <property type="component" value="Chromosome 1"/>
</dbReference>
<dbReference type="RNAct" id="Q9BW92">
    <property type="molecule type" value="protein"/>
</dbReference>
<dbReference type="Bgee" id="ENSG00000143374">
    <property type="expression patterns" value="Expressed in gastrocnemius and 177 other cell types or tissues"/>
</dbReference>
<dbReference type="ExpressionAtlas" id="Q9BW92">
    <property type="expression patterns" value="baseline and differential"/>
</dbReference>
<dbReference type="GO" id="GO:0005759">
    <property type="term" value="C:mitochondrial matrix"/>
    <property type="evidence" value="ECO:0007669"/>
    <property type="project" value="UniProtKB-SubCell"/>
</dbReference>
<dbReference type="GO" id="GO:0005739">
    <property type="term" value="C:mitochondrion"/>
    <property type="evidence" value="ECO:0006056"/>
    <property type="project" value="FlyBase"/>
</dbReference>
<dbReference type="GO" id="GO:0002161">
    <property type="term" value="F:aminoacyl-tRNA deacylase activity"/>
    <property type="evidence" value="ECO:0000314"/>
    <property type="project" value="UniProtKB"/>
</dbReference>
<dbReference type="GO" id="GO:0005524">
    <property type="term" value="F:ATP binding"/>
    <property type="evidence" value="ECO:0007669"/>
    <property type="project" value="UniProtKB-KW"/>
</dbReference>
<dbReference type="GO" id="GO:0042803">
    <property type="term" value="F:protein homodimerization activity"/>
    <property type="evidence" value="ECO:0000314"/>
    <property type="project" value="UniProtKB"/>
</dbReference>
<dbReference type="GO" id="GO:0004829">
    <property type="term" value="F:threonine-tRNA ligase activity"/>
    <property type="evidence" value="ECO:0000314"/>
    <property type="project" value="UniProtKB"/>
</dbReference>
<dbReference type="GO" id="GO:0070159">
    <property type="term" value="P:mitochondrial threonyl-tRNA aminoacylation"/>
    <property type="evidence" value="ECO:0000304"/>
    <property type="project" value="BHF-UCL"/>
</dbReference>
<dbReference type="GO" id="GO:0006435">
    <property type="term" value="P:threonyl-tRNA aminoacylation"/>
    <property type="evidence" value="ECO:0000318"/>
    <property type="project" value="GO_Central"/>
</dbReference>
<dbReference type="CDD" id="cd01667">
    <property type="entry name" value="TGS_ThrRS"/>
    <property type="match status" value="1"/>
</dbReference>
<dbReference type="CDD" id="cd00860">
    <property type="entry name" value="ThrRS_anticodon"/>
    <property type="match status" value="1"/>
</dbReference>
<dbReference type="CDD" id="cd00771">
    <property type="entry name" value="ThrRS_core"/>
    <property type="match status" value="1"/>
</dbReference>
<dbReference type="FunFam" id="3.40.50.800:FF:000003">
    <property type="entry name" value="Threonine--tRNA ligase 2, cytoplasmic"/>
    <property type="match status" value="1"/>
</dbReference>
<dbReference type="FunFam" id="3.10.20.30:FF:000028">
    <property type="entry name" value="threonine--tRNA ligase, mitochondrial isoform X3"/>
    <property type="match status" value="1"/>
</dbReference>
<dbReference type="FunFam" id="3.30.930.10:FF:000105">
    <property type="entry name" value="Threonyl-tRNA synthetase 2, mitochondrial"/>
    <property type="match status" value="1"/>
</dbReference>
<dbReference type="FunFam" id="3.30.980.10:FF:000005">
    <property type="entry name" value="Threonyl-tRNA synthetase, mitochondrial"/>
    <property type="match status" value="1"/>
</dbReference>
<dbReference type="Gene3D" id="3.10.20.30">
    <property type="match status" value="1"/>
</dbReference>
<dbReference type="Gene3D" id="3.40.50.800">
    <property type="entry name" value="Anticodon-binding domain"/>
    <property type="match status" value="1"/>
</dbReference>
<dbReference type="Gene3D" id="3.30.930.10">
    <property type="entry name" value="Bira Bifunctional Protein, Domain 2"/>
    <property type="match status" value="1"/>
</dbReference>
<dbReference type="Gene3D" id="3.30.980.10">
    <property type="entry name" value="Threonyl-trna Synthetase, Chain A, domain 2"/>
    <property type="match status" value="1"/>
</dbReference>
<dbReference type="HAMAP" id="MF_00184">
    <property type="entry name" value="Thr_tRNA_synth"/>
    <property type="match status" value="1"/>
</dbReference>
<dbReference type="InterPro" id="IPR002314">
    <property type="entry name" value="aa-tRNA-synt_IIb"/>
</dbReference>
<dbReference type="InterPro" id="IPR006195">
    <property type="entry name" value="aa-tRNA-synth_II"/>
</dbReference>
<dbReference type="InterPro" id="IPR045864">
    <property type="entry name" value="aa-tRNA-synth_II/BPL/LPL"/>
</dbReference>
<dbReference type="InterPro" id="IPR004154">
    <property type="entry name" value="Anticodon-bd"/>
</dbReference>
<dbReference type="InterPro" id="IPR036621">
    <property type="entry name" value="Anticodon-bd_dom_sf"/>
</dbReference>
<dbReference type="InterPro" id="IPR012675">
    <property type="entry name" value="Beta-grasp_dom_sf"/>
</dbReference>
<dbReference type="InterPro" id="IPR004095">
    <property type="entry name" value="TGS"/>
</dbReference>
<dbReference type="InterPro" id="IPR012676">
    <property type="entry name" value="TGS-like"/>
</dbReference>
<dbReference type="InterPro" id="IPR002320">
    <property type="entry name" value="Thr-tRNA-ligase_IIa"/>
</dbReference>
<dbReference type="InterPro" id="IPR018163">
    <property type="entry name" value="Thr/Ala-tRNA-synth_IIc_edit"/>
</dbReference>
<dbReference type="InterPro" id="IPR047246">
    <property type="entry name" value="ThrRS_anticodon"/>
</dbReference>
<dbReference type="InterPro" id="IPR033728">
    <property type="entry name" value="ThrRS_core"/>
</dbReference>
<dbReference type="InterPro" id="IPR012947">
    <property type="entry name" value="tRNA_SAD"/>
</dbReference>
<dbReference type="NCBIfam" id="TIGR00418">
    <property type="entry name" value="thrS"/>
    <property type="match status" value="1"/>
</dbReference>
<dbReference type="PANTHER" id="PTHR11451:SF27">
    <property type="entry name" value="THREONINE--TRNA LIGASE, MITOCHONDRIAL"/>
    <property type="match status" value="1"/>
</dbReference>
<dbReference type="PANTHER" id="PTHR11451">
    <property type="entry name" value="THREONINE-TRNA LIGASE"/>
    <property type="match status" value="1"/>
</dbReference>
<dbReference type="Pfam" id="PF03129">
    <property type="entry name" value="HGTP_anticodon"/>
    <property type="match status" value="1"/>
</dbReference>
<dbReference type="Pfam" id="PF02824">
    <property type="entry name" value="TGS"/>
    <property type="match status" value="1"/>
</dbReference>
<dbReference type="Pfam" id="PF00587">
    <property type="entry name" value="tRNA-synt_2b"/>
    <property type="match status" value="1"/>
</dbReference>
<dbReference type="Pfam" id="PF07973">
    <property type="entry name" value="tRNA_SAD"/>
    <property type="match status" value="1"/>
</dbReference>
<dbReference type="PRINTS" id="PR01047">
    <property type="entry name" value="TRNASYNTHTHR"/>
</dbReference>
<dbReference type="SMART" id="SM00863">
    <property type="entry name" value="tRNA_SAD"/>
    <property type="match status" value="1"/>
</dbReference>
<dbReference type="SUPFAM" id="SSF52954">
    <property type="entry name" value="Class II aaRS ABD-related"/>
    <property type="match status" value="1"/>
</dbReference>
<dbReference type="SUPFAM" id="SSF55681">
    <property type="entry name" value="Class II aaRS and biotin synthetases"/>
    <property type="match status" value="1"/>
</dbReference>
<dbReference type="SUPFAM" id="SSF81271">
    <property type="entry name" value="TGS-like"/>
    <property type="match status" value="1"/>
</dbReference>
<dbReference type="SUPFAM" id="SSF55186">
    <property type="entry name" value="ThrRS/AlaRS common domain"/>
    <property type="match status" value="1"/>
</dbReference>
<dbReference type="PROSITE" id="PS50862">
    <property type="entry name" value="AA_TRNA_LIGASE_II"/>
    <property type="match status" value="1"/>
</dbReference>
<dbReference type="PROSITE" id="PS51880">
    <property type="entry name" value="TGS"/>
    <property type="match status" value="1"/>
</dbReference>
<gene>
    <name type="primary">TARS2</name>
    <name type="synonym">TARSL1</name>
</gene>
<protein>
    <recommendedName>
        <fullName>Threonine--tRNA ligase, mitochondrial</fullName>
        <ecNumber evidence="5">6.1.1.3</ecNumber>
    </recommendedName>
    <alternativeName>
        <fullName>Threonyl-tRNA synthetase</fullName>
        <shortName>ThrRS</shortName>
    </alternativeName>
    <alternativeName>
        <fullName>Threonyl-tRNA synthetase-like 1</fullName>
    </alternativeName>
</protein>